<gene>
    <name evidence="1" type="primary">upp</name>
    <name type="ordered locus">BMA1883</name>
</gene>
<evidence type="ECO:0000255" key="1">
    <source>
        <dbReference type="HAMAP-Rule" id="MF_01218"/>
    </source>
</evidence>
<comment type="function">
    <text evidence="1">Catalyzes the conversion of uracil and 5-phospho-alpha-D-ribose 1-diphosphate (PRPP) to UMP and diphosphate.</text>
</comment>
<comment type="catalytic activity">
    <reaction evidence="1">
        <text>UMP + diphosphate = 5-phospho-alpha-D-ribose 1-diphosphate + uracil</text>
        <dbReference type="Rhea" id="RHEA:13017"/>
        <dbReference type="ChEBI" id="CHEBI:17568"/>
        <dbReference type="ChEBI" id="CHEBI:33019"/>
        <dbReference type="ChEBI" id="CHEBI:57865"/>
        <dbReference type="ChEBI" id="CHEBI:58017"/>
        <dbReference type="EC" id="2.4.2.9"/>
    </reaction>
</comment>
<comment type="cofactor">
    <cofactor evidence="1">
        <name>Mg(2+)</name>
        <dbReference type="ChEBI" id="CHEBI:18420"/>
    </cofactor>
    <text evidence="1">Binds 1 Mg(2+) ion per subunit. The magnesium is bound as Mg-PRPP.</text>
</comment>
<comment type="activity regulation">
    <text evidence="1">Allosterically activated by GTP.</text>
</comment>
<comment type="pathway">
    <text evidence="1">Pyrimidine metabolism; UMP biosynthesis via salvage pathway; UMP from uracil: step 1/1.</text>
</comment>
<comment type="similarity">
    <text evidence="1">Belongs to the UPRTase family.</text>
</comment>
<reference key="1">
    <citation type="journal article" date="2004" name="Proc. Natl. Acad. Sci. U.S.A.">
        <title>Structural flexibility in the Burkholderia mallei genome.</title>
        <authorList>
            <person name="Nierman W.C."/>
            <person name="DeShazer D."/>
            <person name="Kim H.S."/>
            <person name="Tettelin H."/>
            <person name="Nelson K.E."/>
            <person name="Feldblyum T.V."/>
            <person name="Ulrich R.L."/>
            <person name="Ronning C.M."/>
            <person name="Brinkac L.M."/>
            <person name="Daugherty S.C."/>
            <person name="Davidsen T.D."/>
            <person name="DeBoy R.T."/>
            <person name="Dimitrov G."/>
            <person name="Dodson R.J."/>
            <person name="Durkin A.S."/>
            <person name="Gwinn M.L."/>
            <person name="Haft D.H."/>
            <person name="Khouri H.M."/>
            <person name="Kolonay J.F."/>
            <person name="Madupu R."/>
            <person name="Mohammoud Y."/>
            <person name="Nelson W.C."/>
            <person name="Radune D."/>
            <person name="Romero C.M."/>
            <person name="Sarria S."/>
            <person name="Selengut J."/>
            <person name="Shamblin C."/>
            <person name="Sullivan S.A."/>
            <person name="White O."/>
            <person name="Yu Y."/>
            <person name="Zafar N."/>
            <person name="Zhou L."/>
            <person name="Fraser C.M."/>
        </authorList>
    </citation>
    <scope>NUCLEOTIDE SEQUENCE [LARGE SCALE GENOMIC DNA]</scope>
    <source>
        <strain>ATCC 23344</strain>
    </source>
</reference>
<organism>
    <name type="scientific">Burkholderia mallei (strain ATCC 23344)</name>
    <dbReference type="NCBI Taxonomy" id="243160"/>
    <lineage>
        <taxon>Bacteria</taxon>
        <taxon>Pseudomonadati</taxon>
        <taxon>Pseudomonadota</taxon>
        <taxon>Betaproteobacteria</taxon>
        <taxon>Burkholderiales</taxon>
        <taxon>Burkholderiaceae</taxon>
        <taxon>Burkholderia</taxon>
        <taxon>pseudomallei group</taxon>
    </lineage>
</organism>
<accession>Q62IJ1</accession>
<name>UPP_BURMA</name>
<proteinExistence type="inferred from homology"/>
<protein>
    <recommendedName>
        <fullName evidence="1">Uracil phosphoribosyltransferase</fullName>
        <ecNumber evidence="1">2.4.2.9</ecNumber>
    </recommendedName>
    <alternativeName>
        <fullName evidence="1">UMP pyrophosphorylase</fullName>
    </alternativeName>
    <alternativeName>
        <fullName evidence="1">UPRTase</fullName>
    </alternativeName>
</protein>
<feature type="chain" id="PRO_0000120808" description="Uracil phosphoribosyltransferase">
    <location>
        <begin position="1"/>
        <end position="216"/>
    </location>
</feature>
<feature type="binding site" evidence="1">
    <location>
        <position position="85"/>
    </location>
    <ligand>
        <name>5-phospho-alpha-D-ribose 1-diphosphate</name>
        <dbReference type="ChEBI" id="CHEBI:58017"/>
    </ligand>
</feature>
<feature type="binding site" evidence="1">
    <location>
        <position position="110"/>
    </location>
    <ligand>
        <name>5-phospho-alpha-D-ribose 1-diphosphate</name>
        <dbReference type="ChEBI" id="CHEBI:58017"/>
    </ligand>
</feature>
<feature type="binding site" evidence="1">
    <location>
        <begin position="135"/>
        <end position="143"/>
    </location>
    <ligand>
        <name>5-phospho-alpha-D-ribose 1-diphosphate</name>
        <dbReference type="ChEBI" id="CHEBI:58017"/>
    </ligand>
</feature>
<feature type="binding site" evidence="1">
    <location>
        <position position="200"/>
    </location>
    <ligand>
        <name>uracil</name>
        <dbReference type="ChEBI" id="CHEBI:17568"/>
    </ligand>
</feature>
<feature type="binding site" evidence="1">
    <location>
        <begin position="205"/>
        <end position="207"/>
    </location>
    <ligand>
        <name>uracil</name>
        <dbReference type="ChEBI" id="CHEBI:17568"/>
    </ligand>
</feature>
<feature type="binding site" evidence="1">
    <location>
        <position position="206"/>
    </location>
    <ligand>
        <name>5-phospho-alpha-D-ribose 1-diphosphate</name>
        <dbReference type="ChEBI" id="CHEBI:58017"/>
    </ligand>
</feature>
<keyword id="KW-0021">Allosteric enzyme</keyword>
<keyword id="KW-0328">Glycosyltransferase</keyword>
<keyword id="KW-0342">GTP-binding</keyword>
<keyword id="KW-0460">Magnesium</keyword>
<keyword id="KW-0547">Nucleotide-binding</keyword>
<keyword id="KW-1185">Reference proteome</keyword>
<keyword id="KW-0808">Transferase</keyword>
<dbReference type="EC" id="2.4.2.9" evidence="1"/>
<dbReference type="EMBL" id="CP000010">
    <property type="protein sequence ID" value="AAU49450.1"/>
    <property type="molecule type" value="Genomic_DNA"/>
</dbReference>
<dbReference type="RefSeq" id="WP_004186446.1">
    <property type="nucleotide sequence ID" value="NC_006348.1"/>
</dbReference>
<dbReference type="RefSeq" id="YP_103479.1">
    <property type="nucleotide sequence ID" value="NC_006348.1"/>
</dbReference>
<dbReference type="SMR" id="Q62IJ1"/>
<dbReference type="GeneID" id="93059646"/>
<dbReference type="KEGG" id="bma:BMA1883"/>
<dbReference type="PATRIC" id="fig|243160.12.peg.1924"/>
<dbReference type="eggNOG" id="COG0035">
    <property type="taxonomic scope" value="Bacteria"/>
</dbReference>
<dbReference type="HOGENOM" id="CLU_067096_2_2_4"/>
<dbReference type="UniPathway" id="UPA00574">
    <property type="reaction ID" value="UER00636"/>
</dbReference>
<dbReference type="Proteomes" id="UP000006693">
    <property type="component" value="Chromosome 1"/>
</dbReference>
<dbReference type="GO" id="GO:0005525">
    <property type="term" value="F:GTP binding"/>
    <property type="evidence" value="ECO:0007669"/>
    <property type="project" value="UniProtKB-KW"/>
</dbReference>
<dbReference type="GO" id="GO:0000287">
    <property type="term" value="F:magnesium ion binding"/>
    <property type="evidence" value="ECO:0007669"/>
    <property type="project" value="UniProtKB-UniRule"/>
</dbReference>
<dbReference type="GO" id="GO:0004845">
    <property type="term" value="F:uracil phosphoribosyltransferase activity"/>
    <property type="evidence" value="ECO:0007669"/>
    <property type="project" value="UniProtKB-UniRule"/>
</dbReference>
<dbReference type="GO" id="GO:0044206">
    <property type="term" value="P:UMP salvage"/>
    <property type="evidence" value="ECO:0007669"/>
    <property type="project" value="UniProtKB-UniRule"/>
</dbReference>
<dbReference type="GO" id="GO:0006223">
    <property type="term" value="P:uracil salvage"/>
    <property type="evidence" value="ECO:0007669"/>
    <property type="project" value="InterPro"/>
</dbReference>
<dbReference type="CDD" id="cd06223">
    <property type="entry name" value="PRTases_typeI"/>
    <property type="match status" value="1"/>
</dbReference>
<dbReference type="FunFam" id="3.40.50.2020:FF:000003">
    <property type="entry name" value="Uracil phosphoribosyltransferase"/>
    <property type="match status" value="1"/>
</dbReference>
<dbReference type="Gene3D" id="3.40.50.2020">
    <property type="match status" value="1"/>
</dbReference>
<dbReference type="HAMAP" id="MF_01218_B">
    <property type="entry name" value="Upp_B"/>
    <property type="match status" value="1"/>
</dbReference>
<dbReference type="InterPro" id="IPR000836">
    <property type="entry name" value="PRibTrfase_dom"/>
</dbReference>
<dbReference type="InterPro" id="IPR029057">
    <property type="entry name" value="PRTase-like"/>
</dbReference>
<dbReference type="InterPro" id="IPR034332">
    <property type="entry name" value="Upp_B"/>
</dbReference>
<dbReference type="InterPro" id="IPR050054">
    <property type="entry name" value="UPRTase/APRTase"/>
</dbReference>
<dbReference type="InterPro" id="IPR005765">
    <property type="entry name" value="Ura_phspho_trans"/>
</dbReference>
<dbReference type="NCBIfam" id="NF001097">
    <property type="entry name" value="PRK00129.1"/>
    <property type="match status" value="1"/>
</dbReference>
<dbReference type="NCBIfam" id="TIGR01091">
    <property type="entry name" value="upp"/>
    <property type="match status" value="1"/>
</dbReference>
<dbReference type="PANTHER" id="PTHR32315">
    <property type="entry name" value="ADENINE PHOSPHORIBOSYLTRANSFERASE"/>
    <property type="match status" value="1"/>
</dbReference>
<dbReference type="PANTHER" id="PTHR32315:SF4">
    <property type="entry name" value="URACIL PHOSPHORIBOSYLTRANSFERASE, CHLOROPLASTIC"/>
    <property type="match status" value="1"/>
</dbReference>
<dbReference type="Pfam" id="PF14681">
    <property type="entry name" value="UPRTase"/>
    <property type="match status" value="1"/>
</dbReference>
<dbReference type="SUPFAM" id="SSF53271">
    <property type="entry name" value="PRTase-like"/>
    <property type="match status" value="1"/>
</dbReference>
<sequence length="216" mass="24075">MKQDSRFPNLFILDHPLIQHKLTHMRDKDTSTRTFRELLREITLLMGYEITRNLPITTKRVETPLVEIDAPVIAGKKLAIVPVLRAGVGMSDGLLELIPSARVGHIGVYRADDHRPVEYLVRLPDLEDRIFILCDPMVATGYSAAHAIDVLKRRGVPGERLMFLALVAAPEGVQVFQDAHPDVKLYVASLDSHLDDHAYIVPGLGDAGDRLFGTKN</sequence>